<accession>Q6BRP6</accession>
<feature type="transit peptide" description="Mitochondrion" evidence="2">
    <location>
        <begin position="1"/>
        <end position="40"/>
    </location>
</feature>
<feature type="chain" id="PRO_0000408722" description="Altered inheritance of mitochondria protein 9, mitochondrial">
    <location>
        <begin position="41"/>
        <end position="630"/>
    </location>
</feature>
<protein>
    <recommendedName>
        <fullName>Altered inheritance of mitochondria protein 9, mitochondrial</fullName>
    </recommendedName>
    <alternativeName>
        <fullName>Found in mitochondrial proteome protein 29</fullName>
    </alternativeName>
</protein>
<keyword id="KW-0496">Mitochondrion</keyword>
<keyword id="KW-1185">Reference proteome</keyword>
<keyword id="KW-0809">Transit peptide</keyword>
<organism>
    <name type="scientific">Debaryomyces hansenii (strain ATCC 36239 / CBS 767 / BCRC 21394 / JCM 1990 / NBRC 0083 / IGC 2968)</name>
    <name type="common">Yeast</name>
    <name type="synonym">Torulaspora hansenii</name>
    <dbReference type="NCBI Taxonomy" id="284592"/>
    <lineage>
        <taxon>Eukaryota</taxon>
        <taxon>Fungi</taxon>
        <taxon>Dikarya</taxon>
        <taxon>Ascomycota</taxon>
        <taxon>Saccharomycotina</taxon>
        <taxon>Pichiomycetes</taxon>
        <taxon>Debaryomycetaceae</taxon>
        <taxon>Debaryomyces</taxon>
    </lineage>
</organism>
<evidence type="ECO:0000250" key="1"/>
<evidence type="ECO:0000255" key="2"/>
<evidence type="ECO:0000305" key="3"/>
<gene>
    <name type="primary">AIM9</name>
    <name type="synonym">FMP29</name>
    <name type="ordered locus">DEHA2D14806g</name>
</gene>
<reference key="1">
    <citation type="journal article" date="2004" name="Nature">
        <title>Genome evolution in yeasts.</title>
        <authorList>
            <person name="Dujon B."/>
            <person name="Sherman D."/>
            <person name="Fischer G."/>
            <person name="Durrens P."/>
            <person name="Casaregola S."/>
            <person name="Lafontaine I."/>
            <person name="de Montigny J."/>
            <person name="Marck C."/>
            <person name="Neuveglise C."/>
            <person name="Talla E."/>
            <person name="Goffard N."/>
            <person name="Frangeul L."/>
            <person name="Aigle M."/>
            <person name="Anthouard V."/>
            <person name="Babour A."/>
            <person name="Barbe V."/>
            <person name="Barnay S."/>
            <person name="Blanchin S."/>
            <person name="Beckerich J.-M."/>
            <person name="Beyne E."/>
            <person name="Bleykasten C."/>
            <person name="Boisrame A."/>
            <person name="Boyer J."/>
            <person name="Cattolico L."/>
            <person name="Confanioleri F."/>
            <person name="de Daruvar A."/>
            <person name="Despons L."/>
            <person name="Fabre E."/>
            <person name="Fairhead C."/>
            <person name="Ferry-Dumazet H."/>
            <person name="Groppi A."/>
            <person name="Hantraye F."/>
            <person name="Hennequin C."/>
            <person name="Jauniaux N."/>
            <person name="Joyet P."/>
            <person name="Kachouri R."/>
            <person name="Kerrest A."/>
            <person name="Koszul R."/>
            <person name="Lemaire M."/>
            <person name="Lesur I."/>
            <person name="Ma L."/>
            <person name="Muller H."/>
            <person name="Nicaud J.-M."/>
            <person name="Nikolski M."/>
            <person name="Oztas S."/>
            <person name="Ozier-Kalogeropoulos O."/>
            <person name="Pellenz S."/>
            <person name="Potier S."/>
            <person name="Richard G.-F."/>
            <person name="Straub M.-L."/>
            <person name="Suleau A."/>
            <person name="Swennen D."/>
            <person name="Tekaia F."/>
            <person name="Wesolowski-Louvel M."/>
            <person name="Westhof E."/>
            <person name="Wirth B."/>
            <person name="Zeniou-Meyer M."/>
            <person name="Zivanovic Y."/>
            <person name="Bolotin-Fukuhara M."/>
            <person name="Thierry A."/>
            <person name="Bouchier C."/>
            <person name="Caudron B."/>
            <person name="Scarpelli C."/>
            <person name="Gaillardin C."/>
            <person name="Weissenbach J."/>
            <person name="Wincker P."/>
            <person name="Souciet J.-L."/>
        </authorList>
    </citation>
    <scope>NUCLEOTIDE SEQUENCE [LARGE SCALE GENOMIC DNA]</scope>
    <source>
        <strain>ATCC 36239 / CBS 767 / BCRC 21394 / JCM 1990 / NBRC 0083 / IGC 2968</strain>
    </source>
</reference>
<comment type="subcellular location">
    <subcellularLocation>
        <location evidence="1">Mitochondrion</location>
    </subcellularLocation>
</comment>
<comment type="similarity">
    <text evidence="3">Belongs to the AIM9 family.</text>
</comment>
<dbReference type="EMBL" id="CR382136">
    <property type="protein sequence ID" value="CAG87293.2"/>
    <property type="molecule type" value="Genomic_DNA"/>
</dbReference>
<dbReference type="RefSeq" id="XP_459124.2">
    <property type="nucleotide sequence ID" value="XM_459124.1"/>
</dbReference>
<dbReference type="FunCoup" id="Q6BRP6">
    <property type="interactions" value="24"/>
</dbReference>
<dbReference type="STRING" id="284592.Q6BRP6"/>
<dbReference type="GeneID" id="2901363"/>
<dbReference type="KEGG" id="dha:DEHA2D14806g"/>
<dbReference type="VEuPathDB" id="FungiDB:DEHA2D14806g"/>
<dbReference type="eggNOG" id="ENOG502QV1E">
    <property type="taxonomic scope" value="Eukaryota"/>
</dbReference>
<dbReference type="HOGENOM" id="CLU_019189_0_1_1"/>
<dbReference type="InParanoid" id="Q6BRP6"/>
<dbReference type="OMA" id="GWIPQDM"/>
<dbReference type="OrthoDB" id="2968323at2759"/>
<dbReference type="Proteomes" id="UP000000599">
    <property type="component" value="Chromosome D"/>
</dbReference>
<dbReference type="GO" id="GO:0005739">
    <property type="term" value="C:mitochondrion"/>
    <property type="evidence" value="ECO:0007669"/>
    <property type="project" value="UniProtKB-SubCell"/>
</dbReference>
<dbReference type="Gene3D" id="3.30.200.20">
    <property type="entry name" value="Phosphorylase Kinase, domain 1"/>
    <property type="match status" value="1"/>
</dbReference>
<dbReference type="InterPro" id="IPR002575">
    <property type="entry name" value="Aminoglycoside_PTrfase"/>
</dbReference>
<dbReference type="InterPro" id="IPR011009">
    <property type="entry name" value="Kinase-like_dom_sf"/>
</dbReference>
<dbReference type="InterPro" id="IPR051035">
    <property type="entry name" value="Mito_inheritance_9"/>
</dbReference>
<dbReference type="PANTHER" id="PTHR36091">
    <property type="entry name" value="ALTERED INHERITANCE OF MITOCHONDRIA PROTEIN 9, MITOCHONDRIAL"/>
    <property type="match status" value="1"/>
</dbReference>
<dbReference type="PANTHER" id="PTHR36091:SF1">
    <property type="entry name" value="ALTERED INHERITANCE OF MITOCHONDRIA PROTEIN 9, MITOCHONDRIAL"/>
    <property type="match status" value="1"/>
</dbReference>
<dbReference type="Pfam" id="PF01636">
    <property type="entry name" value="APH"/>
    <property type="match status" value="1"/>
</dbReference>
<dbReference type="SUPFAM" id="SSF56112">
    <property type="entry name" value="Protein kinase-like (PK-like)"/>
    <property type="match status" value="1"/>
</dbReference>
<proteinExistence type="inferred from homology"/>
<sequence length="630" mass="71947">MLKLTSRVGPKRLSSGLKSSSFKVNATIISKKFQSSLNSKPNEVYTKLSDSEDPKRHQFFQYTWGSWMKNDQSEKSKRETKFSIEGITKLLQDLNVESKNQRNIDKSGEPFVKAPSQLKDGSYVLTQNLTSNLIGKEDSLLVKSIASIHEGKHNRIYKVTLSTGKELVLRIPYKLESEYSISQKIKSEVATMDFLNLKLGANVPKVVAYGANKVNSLQSPFILMEHIEGDLLMKQWDPLVADETEGSQEKLKSVIEPIAAFQEKLLSITFNKFGSLYFNDDVSVTDQSSLPYNGEENPLLTKRWRIGPSVEKSFSKNKNQLSEKEIKQYSRSIDADKPLETITSIAGIELENLRNRLALAQADSGNKVENVELIQKMIATFENLKTMSTKLFNPNSQSLMNAEELFKPRLYCPDLDPLNVILNSNKNNEPYFVDFEYTSIKPFILSSYPSFVGYQGAKIYNLEEDIPGYSEMDEVEKQQYQFMYYKTRNERLWELELNSRKHDLIAVASPHVKVLKSPYVQALDFKNDKDYLYIEGSIVQLQAMWEAYVANELCNATETEFPIAFTAEYLDEHQKDIEDYQMEIVSTPFAATSGWVPQDMFDSLKEQGIIVETENGDFKVETENVLKESE</sequence>
<name>AIM9_DEBHA</name>